<organism>
    <name type="scientific">Prochlorococcus marinus subsp. pastoris (strain CCMP1986 / NIES-2087 / MED4)</name>
    <dbReference type="NCBI Taxonomy" id="59919"/>
    <lineage>
        <taxon>Bacteria</taxon>
        <taxon>Bacillati</taxon>
        <taxon>Cyanobacteriota</taxon>
        <taxon>Cyanophyceae</taxon>
        <taxon>Synechococcales</taxon>
        <taxon>Prochlorococcaceae</taxon>
        <taxon>Prochlorococcus</taxon>
    </lineage>
</organism>
<keyword id="KW-0320">Glycogen biosynthesis</keyword>
<keyword id="KW-0328">Glycosyltransferase</keyword>
<keyword id="KW-0808">Transferase</keyword>
<gene>
    <name evidence="1" type="primary">glgA</name>
    <name type="ordered locus">PMM0609</name>
</gene>
<comment type="function">
    <text evidence="1">Synthesizes alpha-1,4-glucan chains using ADP-glucose.</text>
</comment>
<comment type="catalytic activity">
    <reaction evidence="1">
        <text>[(1-&gt;4)-alpha-D-glucosyl](n) + ADP-alpha-D-glucose = [(1-&gt;4)-alpha-D-glucosyl](n+1) + ADP + H(+)</text>
        <dbReference type="Rhea" id="RHEA:18189"/>
        <dbReference type="Rhea" id="RHEA-COMP:9584"/>
        <dbReference type="Rhea" id="RHEA-COMP:9587"/>
        <dbReference type="ChEBI" id="CHEBI:15378"/>
        <dbReference type="ChEBI" id="CHEBI:15444"/>
        <dbReference type="ChEBI" id="CHEBI:57498"/>
        <dbReference type="ChEBI" id="CHEBI:456216"/>
        <dbReference type="EC" id="2.4.1.21"/>
    </reaction>
</comment>
<comment type="pathway">
    <text evidence="1">Glycan biosynthesis; glycogen biosynthesis.</text>
</comment>
<comment type="similarity">
    <text evidence="1">Belongs to the glycosyltransferase 1 family. Bacterial/plant glycogen synthase subfamily.</text>
</comment>
<dbReference type="EC" id="2.4.1.21" evidence="1"/>
<dbReference type="EMBL" id="BX548174">
    <property type="protein sequence ID" value="CAE19068.1"/>
    <property type="molecule type" value="Genomic_DNA"/>
</dbReference>
<dbReference type="RefSeq" id="WP_011132243.1">
    <property type="nucleotide sequence ID" value="NC_005072.1"/>
</dbReference>
<dbReference type="SMR" id="Q7V275"/>
<dbReference type="STRING" id="59919.PMM0609"/>
<dbReference type="CAZy" id="GT5">
    <property type="family name" value="Glycosyltransferase Family 5"/>
</dbReference>
<dbReference type="KEGG" id="pmm:PMM0609"/>
<dbReference type="eggNOG" id="COG0297">
    <property type="taxonomic scope" value="Bacteria"/>
</dbReference>
<dbReference type="HOGENOM" id="CLU_009583_18_2_3"/>
<dbReference type="OrthoDB" id="9808590at2"/>
<dbReference type="UniPathway" id="UPA00164"/>
<dbReference type="Proteomes" id="UP000001026">
    <property type="component" value="Chromosome"/>
</dbReference>
<dbReference type="GO" id="GO:0009011">
    <property type="term" value="F:alpha-1,4-glucan glucosyltransferase (ADP-glucose donor) activity"/>
    <property type="evidence" value="ECO:0007669"/>
    <property type="project" value="UniProtKB-UniRule"/>
</dbReference>
<dbReference type="GO" id="GO:0004373">
    <property type="term" value="F:alpha-1,4-glucan glucosyltransferase (UDP-glucose donor) activity"/>
    <property type="evidence" value="ECO:0007669"/>
    <property type="project" value="InterPro"/>
</dbReference>
<dbReference type="GO" id="GO:0005978">
    <property type="term" value="P:glycogen biosynthetic process"/>
    <property type="evidence" value="ECO:0007669"/>
    <property type="project" value="UniProtKB-UniRule"/>
</dbReference>
<dbReference type="CDD" id="cd03791">
    <property type="entry name" value="GT5_Glycogen_synthase_DULL1-like"/>
    <property type="match status" value="1"/>
</dbReference>
<dbReference type="Gene3D" id="3.40.50.2000">
    <property type="entry name" value="Glycogen Phosphorylase B"/>
    <property type="match status" value="2"/>
</dbReference>
<dbReference type="HAMAP" id="MF_00484">
    <property type="entry name" value="Glycogen_synth"/>
    <property type="match status" value="1"/>
</dbReference>
<dbReference type="InterPro" id="IPR001296">
    <property type="entry name" value="Glyco_trans_1"/>
</dbReference>
<dbReference type="InterPro" id="IPR011835">
    <property type="entry name" value="GS/SS"/>
</dbReference>
<dbReference type="InterPro" id="IPR013534">
    <property type="entry name" value="Starch_synth_cat_dom"/>
</dbReference>
<dbReference type="NCBIfam" id="TIGR02095">
    <property type="entry name" value="glgA"/>
    <property type="match status" value="1"/>
</dbReference>
<dbReference type="NCBIfam" id="NF001900">
    <property type="entry name" value="PRK00654.1-3"/>
    <property type="match status" value="1"/>
</dbReference>
<dbReference type="PANTHER" id="PTHR45825:SF11">
    <property type="entry name" value="ALPHA AMYLASE DOMAIN-CONTAINING PROTEIN"/>
    <property type="match status" value="1"/>
</dbReference>
<dbReference type="PANTHER" id="PTHR45825">
    <property type="entry name" value="GRANULE-BOUND STARCH SYNTHASE 1, CHLOROPLASTIC/AMYLOPLASTIC"/>
    <property type="match status" value="1"/>
</dbReference>
<dbReference type="Pfam" id="PF08323">
    <property type="entry name" value="Glyco_transf_5"/>
    <property type="match status" value="1"/>
</dbReference>
<dbReference type="Pfam" id="PF00534">
    <property type="entry name" value="Glycos_transf_1"/>
    <property type="match status" value="1"/>
</dbReference>
<dbReference type="SUPFAM" id="SSF53756">
    <property type="entry name" value="UDP-Glycosyltransferase/glycogen phosphorylase"/>
    <property type="match status" value="1"/>
</dbReference>
<proteinExistence type="inferred from homology"/>
<name>GLGA_PROMP</name>
<evidence type="ECO:0000255" key="1">
    <source>
        <dbReference type="HAMAP-Rule" id="MF_00484"/>
    </source>
</evidence>
<accession>Q7V275</accession>
<sequence>MRILLAAAECAPMIKVGGMGDVVGSLPPSLIKLGHDVRVIIPGYSKLWNLLEVSSEPVFRANTMGNDFSVYEAKHPIHNYVIYLVGHPTFDSGHIYGGEDEDWRFTFFASATAEFSWNCWKPQVLHCHDWHTGMIPVWMHQDPEVSTVFTIHNLKYQGPWRWKLEKMTWCPWYMHGDHTMAAAMLYADRVNAVSPTYADEIKTHEYGESLEGLLNYISGKLRGILNGIDLNEWDPDKDKVLPAQFNIKNLESRLENKIILQKEMGLEVNSKKYLLGMVSRLVDQKGVDLVLQVSRRLLAYTDSQIAILGTGDRSLESGLWQLALDYPGRFSVFLTYDDSLSRLIYGGSDAFLMPSRFEPCGISQLLAMRYGSIPIVRRVGGLVDTVLPHDPENNSGTGFCFDRFEPIDFYTALVRSWEAFRHKDSWKSLQLRAMSQEFSWQRSALEYESMYKDVCGIKAPSPDIAEIEKFSYGQSADPSLKTM</sequence>
<protein>
    <recommendedName>
        <fullName evidence="1">Glycogen synthase</fullName>
        <ecNumber evidence="1">2.4.1.21</ecNumber>
    </recommendedName>
    <alternativeName>
        <fullName evidence="1">Starch [bacterial glycogen] synthase</fullName>
    </alternativeName>
</protein>
<reference key="1">
    <citation type="journal article" date="2003" name="Nature">
        <title>Genome divergence in two Prochlorococcus ecotypes reflects oceanic niche differentiation.</title>
        <authorList>
            <person name="Rocap G."/>
            <person name="Larimer F.W."/>
            <person name="Lamerdin J.E."/>
            <person name="Malfatti S."/>
            <person name="Chain P."/>
            <person name="Ahlgren N.A."/>
            <person name="Arellano A."/>
            <person name="Coleman M."/>
            <person name="Hauser L."/>
            <person name="Hess W.R."/>
            <person name="Johnson Z.I."/>
            <person name="Land M.L."/>
            <person name="Lindell D."/>
            <person name="Post A.F."/>
            <person name="Regala W."/>
            <person name="Shah M."/>
            <person name="Shaw S.L."/>
            <person name="Steglich C."/>
            <person name="Sullivan M.B."/>
            <person name="Ting C.S."/>
            <person name="Tolonen A."/>
            <person name="Webb E.A."/>
            <person name="Zinser E.R."/>
            <person name="Chisholm S.W."/>
        </authorList>
    </citation>
    <scope>NUCLEOTIDE SEQUENCE [LARGE SCALE GENOMIC DNA]</scope>
    <source>
        <strain>CCMP1986 / NIES-2087 / MED4</strain>
    </source>
</reference>
<feature type="chain" id="PRO_0000188631" description="Glycogen synthase">
    <location>
        <begin position="1"/>
        <end position="483"/>
    </location>
</feature>
<feature type="binding site" evidence="1">
    <location>
        <position position="15"/>
    </location>
    <ligand>
        <name>ADP-alpha-D-glucose</name>
        <dbReference type="ChEBI" id="CHEBI:57498"/>
    </ligand>
</feature>